<accession>Q7JXA8</accession>
<sequence>MSRNHQRPNLGLVDAPPNDHVEEYVVEKILGKRFVNGRPQVLVKWSGFPNENNTWEPLENVGNCMKLVSDFESEVFRLHRKAAAKSVGKSKSSPSSSGPLITENGPSSSKKTQQHSKSVQAKNTAGMSKMNQKKGKNIKKTAGKIKDIENYPKTQMPSTSQVSTDSTEVFDGNPSATTTNMIKSPRIQSLFSDLNLIEPTKDKDVGDTSLKTPPKSRRLIEFPQREDAPLSSKHVSPMLIRKESQPLQSSCTDDSDLGESSSSMSLPTVSSTSSEKSIKVTKSEPKTLGQIKFSSRSSDGGHAASSLGAPKEGDIGLDLSGSDSMDSEVESMRRCPRRKRKKTYPDWKFPEMTKPFGVNRGLDLDKILHCYQMNDDLFMFVTWKGCSSIDAVHINDIKEAYPLQIIKYFESLRIIVPK</sequence>
<dbReference type="EMBL" id="AF411862">
    <property type="protein sequence ID" value="AAL05865.1"/>
    <property type="molecule type" value="mRNA"/>
</dbReference>
<dbReference type="EMBL" id="AE013599">
    <property type="protein sequence ID" value="AAF57822.1"/>
    <property type="molecule type" value="Genomic_DNA"/>
</dbReference>
<dbReference type="EMBL" id="AY094869">
    <property type="protein sequence ID" value="AAM11222.1"/>
    <property type="molecule type" value="mRNA"/>
</dbReference>
<dbReference type="RefSeq" id="NP_536794.1">
    <property type="nucleotide sequence ID" value="NM_080533.4"/>
</dbReference>
<dbReference type="PDB" id="4QUC">
    <property type="method" value="X-ray"/>
    <property type="resolution" value="1.50 A"/>
    <property type="chains" value="A=19-85"/>
</dbReference>
<dbReference type="PDB" id="4QUF">
    <property type="method" value="X-ray"/>
    <property type="resolution" value="2.50 A"/>
    <property type="chains" value="A/B/C/D/E/F=19-85"/>
</dbReference>
<dbReference type="PDB" id="4U68">
    <property type="method" value="X-ray"/>
    <property type="resolution" value="1.80 A"/>
    <property type="chains" value="A/B/C=20-90"/>
</dbReference>
<dbReference type="PDB" id="5XYV">
    <property type="method" value="X-ray"/>
    <property type="resolution" value="2.10 A"/>
    <property type="chains" value="A/B=353-418"/>
</dbReference>
<dbReference type="PDBsum" id="4QUC"/>
<dbReference type="PDBsum" id="4QUF"/>
<dbReference type="PDBsum" id="4U68"/>
<dbReference type="PDBsum" id="5XYV"/>
<dbReference type="SMR" id="Q7JXA8"/>
<dbReference type="ComplexPortal" id="CPX-3213">
    <property type="entry name" value="Rhino-Deadlock-Cutoff complex"/>
</dbReference>
<dbReference type="FunCoup" id="Q7JXA8">
    <property type="interactions" value="45"/>
</dbReference>
<dbReference type="IntAct" id="Q7JXA8">
    <property type="interactions" value="15"/>
</dbReference>
<dbReference type="MINT" id="Q7JXA8"/>
<dbReference type="STRING" id="7227.FBpp0086056"/>
<dbReference type="PaxDb" id="7227-FBpp0086056"/>
<dbReference type="DNASU" id="44879"/>
<dbReference type="EnsemblMetazoa" id="FBtr0086897">
    <property type="protein sequence ID" value="FBpp0086056"/>
    <property type="gene ID" value="FBgn0004400"/>
</dbReference>
<dbReference type="GeneID" id="44879"/>
<dbReference type="KEGG" id="dme:Dmel_CG10683"/>
<dbReference type="UCSC" id="CG10683-RA">
    <property type="organism name" value="d. melanogaster"/>
</dbReference>
<dbReference type="AGR" id="FB:FBgn0004400"/>
<dbReference type="CTD" id="44879"/>
<dbReference type="FlyBase" id="FBgn0004400">
    <property type="gene designation" value="rhi"/>
</dbReference>
<dbReference type="VEuPathDB" id="VectorBase:FBgn0004400"/>
<dbReference type="eggNOG" id="KOG1911">
    <property type="taxonomic scope" value="Eukaryota"/>
</dbReference>
<dbReference type="HOGENOM" id="CLU_671341_0_0_1"/>
<dbReference type="InParanoid" id="Q7JXA8"/>
<dbReference type="OMA" id="SHEINQY"/>
<dbReference type="OrthoDB" id="1918685at2759"/>
<dbReference type="BioGRID-ORCS" id="44879">
    <property type="hits" value="0 hits in 1 CRISPR screen"/>
</dbReference>
<dbReference type="EvolutionaryTrace" id="Q7JXA8"/>
<dbReference type="GenomeRNAi" id="44879"/>
<dbReference type="PRO" id="PR:Q7JXA8"/>
<dbReference type="Proteomes" id="UP000000803">
    <property type="component" value="Chromosome 2R"/>
</dbReference>
<dbReference type="Bgee" id="FBgn0004400">
    <property type="expression patterns" value="Expressed in spermatogonium in testis and 31 other cell types or tissues"/>
</dbReference>
<dbReference type="ExpressionAtlas" id="Q7JXA8">
    <property type="expression patterns" value="baseline and differential"/>
</dbReference>
<dbReference type="GO" id="GO:0000785">
    <property type="term" value="C:chromatin"/>
    <property type="evidence" value="ECO:0000250"/>
    <property type="project" value="FlyBase"/>
</dbReference>
<dbReference type="GO" id="GO:0000792">
    <property type="term" value="C:heterochromatin"/>
    <property type="evidence" value="ECO:0000314"/>
    <property type="project" value="FlyBase"/>
</dbReference>
<dbReference type="GO" id="GO:0005634">
    <property type="term" value="C:nucleus"/>
    <property type="evidence" value="ECO:0000314"/>
    <property type="project" value="FlyBase"/>
</dbReference>
<dbReference type="GO" id="GO:0005721">
    <property type="term" value="C:pericentric heterochromatin"/>
    <property type="evidence" value="ECO:0000318"/>
    <property type="project" value="GO_Central"/>
</dbReference>
<dbReference type="GO" id="GO:1990469">
    <property type="term" value="C:Rhino-Deadlock-Cutoff Complex"/>
    <property type="evidence" value="ECO:0000303"/>
    <property type="project" value="ComplexPortal"/>
</dbReference>
<dbReference type="GO" id="GO:0003682">
    <property type="term" value="F:chromatin binding"/>
    <property type="evidence" value="ECO:0000314"/>
    <property type="project" value="FlyBase"/>
</dbReference>
<dbReference type="GO" id="GO:0035064">
    <property type="term" value="F:methylated histone binding"/>
    <property type="evidence" value="ECO:0000318"/>
    <property type="project" value="GO_Central"/>
</dbReference>
<dbReference type="GO" id="GO:0030381">
    <property type="term" value="P:chorion-containing eggshell pattern formation"/>
    <property type="evidence" value="ECO:0000315"/>
    <property type="project" value="FlyBase"/>
</dbReference>
<dbReference type="GO" id="GO:0051276">
    <property type="term" value="P:chromosome organization"/>
    <property type="evidence" value="ECO:0000250"/>
    <property type="project" value="FlyBase"/>
</dbReference>
<dbReference type="GO" id="GO:0031507">
    <property type="term" value="P:heterochromatin formation"/>
    <property type="evidence" value="ECO:0000318"/>
    <property type="project" value="GO_Central"/>
</dbReference>
<dbReference type="GO" id="GO:0034587">
    <property type="term" value="P:piRNA processing"/>
    <property type="evidence" value="ECO:0000303"/>
    <property type="project" value="ComplexPortal"/>
</dbReference>
<dbReference type="GO" id="GO:0140541">
    <property type="term" value="P:piRNA transcription"/>
    <property type="evidence" value="ECO:0000315"/>
    <property type="project" value="FlyBase"/>
</dbReference>
<dbReference type="GO" id="GO:0140543">
    <property type="term" value="P:positive regulation of piRNA transcription"/>
    <property type="evidence" value="ECO:0000314"/>
    <property type="project" value="FlyBase"/>
</dbReference>
<dbReference type="GO" id="GO:1905382">
    <property type="term" value="P:positive regulation of snRNA transcription by RNA polymerase II"/>
    <property type="evidence" value="ECO:0000315"/>
    <property type="project" value="FlyBase"/>
</dbReference>
<dbReference type="GO" id="GO:0045944">
    <property type="term" value="P:positive regulation of transcription by RNA polymerase II"/>
    <property type="evidence" value="ECO:0000315"/>
    <property type="project" value="FlyBase"/>
</dbReference>
<dbReference type="GO" id="GO:0031564">
    <property type="term" value="P:transcription antitermination"/>
    <property type="evidence" value="ECO:0007669"/>
    <property type="project" value="UniProtKB-KW"/>
</dbReference>
<dbReference type="CDD" id="cd18630">
    <property type="entry name" value="CD_Rhino"/>
    <property type="match status" value="1"/>
</dbReference>
<dbReference type="CDD" id="cd00034">
    <property type="entry name" value="CSD"/>
    <property type="match status" value="1"/>
</dbReference>
<dbReference type="FunFam" id="2.40.50.40:FF:000039">
    <property type="entry name" value="RE36324p"/>
    <property type="match status" value="1"/>
</dbReference>
<dbReference type="Gene3D" id="2.40.50.40">
    <property type="match status" value="2"/>
</dbReference>
<dbReference type="InterPro" id="IPR049558">
    <property type="entry name" value="CD_Rhino"/>
</dbReference>
<dbReference type="InterPro" id="IPR016197">
    <property type="entry name" value="Chromo-like_dom_sf"/>
</dbReference>
<dbReference type="InterPro" id="IPR000953">
    <property type="entry name" value="Chromo/chromo_shadow_dom"/>
</dbReference>
<dbReference type="InterPro" id="IPR023780">
    <property type="entry name" value="Chromo_domain"/>
</dbReference>
<dbReference type="InterPro" id="IPR051219">
    <property type="entry name" value="Heterochromatin_chromo-domain"/>
</dbReference>
<dbReference type="PANTHER" id="PTHR22812">
    <property type="entry name" value="CHROMOBOX PROTEIN"/>
    <property type="match status" value="1"/>
</dbReference>
<dbReference type="Pfam" id="PF00385">
    <property type="entry name" value="Chromo"/>
    <property type="match status" value="1"/>
</dbReference>
<dbReference type="SMART" id="SM00298">
    <property type="entry name" value="CHROMO"/>
    <property type="match status" value="1"/>
</dbReference>
<dbReference type="SUPFAM" id="SSF54160">
    <property type="entry name" value="Chromo domain-like"/>
    <property type="match status" value="2"/>
</dbReference>
<dbReference type="PROSITE" id="PS50013">
    <property type="entry name" value="CHROMO_2"/>
    <property type="match status" value="1"/>
</dbReference>
<name>RHINO_DROME</name>
<proteinExistence type="evidence at protein level"/>
<evidence type="ECO:0000255" key="1">
    <source>
        <dbReference type="PROSITE-ProRule" id="PRU00053"/>
    </source>
</evidence>
<evidence type="ECO:0000256" key="2">
    <source>
        <dbReference type="SAM" id="MobiDB-lite"/>
    </source>
</evidence>
<evidence type="ECO:0000269" key="3">
    <source>
    </source>
</evidence>
<evidence type="ECO:0000269" key="4">
    <source>
    </source>
</evidence>
<evidence type="ECO:0000269" key="5">
    <source>
    </source>
</evidence>
<evidence type="ECO:0000269" key="6">
    <source>
    </source>
</evidence>
<evidence type="ECO:0000269" key="7">
    <source>
    </source>
</evidence>
<evidence type="ECO:0000269" key="8">
    <source>
    </source>
</evidence>
<evidence type="ECO:0000269" key="9">
    <source>
    </source>
</evidence>
<evidence type="ECO:0000269" key="10">
    <source>
    </source>
</evidence>
<evidence type="ECO:0000303" key="11">
    <source>
    </source>
</evidence>
<evidence type="ECO:0000303" key="12">
    <source>
    </source>
</evidence>
<evidence type="ECO:0000305" key="13"/>
<evidence type="ECO:0000312" key="14">
    <source>
        <dbReference type="EMBL" id="AAL05865.1"/>
    </source>
</evidence>
<evidence type="ECO:0000312" key="15">
    <source>
        <dbReference type="EMBL" id="AAM11222.1"/>
    </source>
</evidence>
<evidence type="ECO:0000312" key="16">
    <source>
        <dbReference type="FlyBase" id="FBgn0004400"/>
    </source>
</evidence>
<evidence type="ECO:0000312" key="17">
    <source>
        <dbReference type="Proteomes" id="UP000000803"/>
    </source>
</evidence>
<evidence type="ECO:0007744" key="18">
    <source>
        <dbReference type="PDB" id="4QUC"/>
    </source>
</evidence>
<evidence type="ECO:0007744" key="19">
    <source>
        <dbReference type="PDB" id="4QUF"/>
    </source>
</evidence>
<evidence type="ECO:0007744" key="20">
    <source>
        <dbReference type="PDB" id="4U68"/>
    </source>
</evidence>
<evidence type="ECO:0007744" key="21">
    <source>
        <dbReference type="PDB" id="5XYV"/>
    </source>
</evidence>
<evidence type="ECO:0007829" key="22">
    <source>
        <dbReference type="PDB" id="4QUC"/>
    </source>
</evidence>
<evidence type="ECO:0007829" key="23">
    <source>
        <dbReference type="PDB" id="4QUF"/>
    </source>
</evidence>
<evidence type="ECO:0007829" key="24">
    <source>
        <dbReference type="PDB" id="4U68"/>
    </source>
</evidence>
<evidence type="ECO:0007829" key="25">
    <source>
        <dbReference type="PDB" id="5XYV"/>
    </source>
</evidence>
<feature type="chain" id="PRO_0000458884" description="Chromo domain-containing protein rhino">
    <location>
        <begin position="1"/>
        <end position="418"/>
    </location>
</feature>
<feature type="domain" description="Chromo" evidence="1">
    <location>
        <begin position="24"/>
        <end position="74"/>
    </location>
</feature>
<feature type="region of interest" description="Disordered" evidence="2">
    <location>
        <begin position="84"/>
        <end position="167"/>
    </location>
</feature>
<feature type="region of interest" description="Disordered" evidence="2">
    <location>
        <begin position="199"/>
        <end position="337"/>
    </location>
</feature>
<feature type="region of interest" description="Required for interaction with del/deadlock" evidence="9">
    <location>
        <begin position="353"/>
        <end position="418"/>
    </location>
</feature>
<feature type="compositionally biased region" description="Low complexity" evidence="2">
    <location>
        <begin position="84"/>
        <end position="99"/>
    </location>
</feature>
<feature type="compositionally biased region" description="Low complexity" evidence="2">
    <location>
        <begin position="107"/>
        <end position="120"/>
    </location>
</feature>
<feature type="compositionally biased region" description="Basic residues" evidence="2">
    <location>
        <begin position="131"/>
        <end position="143"/>
    </location>
</feature>
<feature type="compositionally biased region" description="Polar residues" evidence="2">
    <location>
        <begin position="152"/>
        <end position="167"/>
    </location>
</feature>
<feature type="compositionally biased region" description="Basic and acidic residues" evidence="2">
    <location>
        <begin position="218"/>
        <end position="228"/>
    </location>
</feature>
<feature type="compositionally biased region" description="Low complexity" evidence="2">
    <location>
        <begin position="258"/>
        <end position="275"/>
    </location>
</feature>
<feature type="compositionally biased region" description="Basic and acidic residues" evidence="2">
    <location>
        <begin position="276"/>
        <end position="285"/>
    </location>
</feature>
<feature type="mutagenesis site" description="Disrupts dimerization, reduces nuclear foci association in nurse cells, cannot inhibit transposon hyperexpression and is unable to rescue sterility phenotype of knockout mutants; when associated with A-76." evidence="7">
    <original>F</original>
    <variation>A</variation>
    <location>
        <position position="34"/>
    </location>
</feature>
<feature type="mutagenesis site" description="Abolishes binding to H3K9me3 peptide, reduces nuclear foci association in nurse cells, cannot inhibit transposon hyperexpression and is unable to rescue sterility phenotype of knockout mutants." evidence="7">
    <original>W</original>
    <variation>A</variation>
    <location>
        <position position="45"/>
    </location>
</feature>
<feature type="mutagenesis site" description="Abolishes binding to H3K9me3 peptide." evidence="7">
    <original>F</original>
    <variation>A</variation>
    <location>
        <position position="48"/>
    </location>
</feature>
<feature type="mutagenesis site" description="Disrupts dimerization, reduces nuclear foci association in nurse cells, cannot inhibit transposon hyperexpression and is unable to rescue sterility phenotype of knockout mutants; when associated with A-34." evidence="7">
    <original>F</original>
    <variation>A</variation>
    <location>
        <position position="76"/>
    </location>
</feature>
<feature type="mutagenesis site" description="Disrupts interaction with del/deadlock and nuclear foci accumulation, cannot inhibit transposon hyperexpression and is unable to rescue sterility phenotype of knockout mutants. Reduced protein stability." evidence="9">
    <original>HCYQM</original>
    <variation>GCTQS</variation>
    <location>
        <begin position="369"/>
        <end position="373"/>
    </location>
</feature>
<feature type="mutagenesis site" description="Disrupts interaction with del/deadlock and nuclear foci accumulation, cannot inhibit transposon hyperexpression and is unable to rescue sterility phenotype of knockout mutants. Reduced protein stability." evidence="9">
    <original>YQMNDDLFMF</original>
    <variation>TQMNDDLSMS</variation>
    <location>
        <begin position="371"/>
        <end position="380"/>
    </location>
</feature>
<feature type="mutagenesis site" description="Disrupts interaction with del/deadlock and nuclear foci accumulation, cannot inhibit transposon hyperexpression and is unable to rescue sterility phenotype of knockout mutants. Reduced protein stability." evidence="9">
    <original>LRIIV</original>
    <variation>AAAAA</variation>
    <location>
        <begin position="412"/>
        <end position="416"/>
    </location>
</feature>
<feature type="strand" evidence="22">
    <location>
        <begin position="26"/>
        <end position="35"/>
    </location>
</feature>
<feature type="strand" evidence="22">
    <location>
        <begin position="38"/>
        <end position="45"/>
    </location>
</feature>
<feature type="helix" evidence="22">
    <location>
        <begin position="50"/>
        <end position="52"/>
    </location>
</feature>
<feature type="strand" evidence="22">
    <location>
        <begin position="54"/>
        <end position="57"/>
    </location>
</feature>
<feature type="helix" evidence="22">
    <location>
        <begin position="58"/>
        <end position="60"/>
    </location>
</feature>
<feature type="helix" evidence="24">
    <location>
        <begin position="62"/>
        <end position="64"/>
    </location>
</feature>
<feature type="helix" evidence="22">
    <location>
        <begin position="65"/>
        <end position="77"/>
    </location>
</feature>
<feature type="helix" evidence="23">
    <location>
        <begin position="79"/>
        <end position="83"/>
    </location>
</feature>
<feature type="helix" evidence="25">
    <location>
        <begin position="357"/>
        <end position="360"/>
    </location>
</feature>
<feature type="strand" evidence="25">
    <location>
        <begin position="364"/>
        <end position="373"/>
    </location>
</feature>
<feature type="strand" evidence="25">
    <location>
        <begin position="376"/>
        <end position="383"/>
    </location>
</feature>
<feature type="strand" evidence="25">
    <location>
        <begin position="389"/>
        <end position="393"/>
    </location>
</feature>
<feature type="helix" evidence="25">
    <location>
        <begin position="394"/>
        <end position="397"/>
    </location>
</feature>
<feature type="turn" evidence="25">
    <location>
        <begin position="398"/>
        <end position="400"/>
    </location>
</feature>
<feature type="helix" evidence="25">
    <location>
        <begin position="402"/>
        <end position="410"/>
    </location>
</feature>
<feature type="strand" evidence="25">
    <location>
        <begin position="412"/>
        <end position="415"/>
    </location>
</feature>
<gene>
    <name evidence="16" type="primary">rhi</name>
    <name evidence="16" type="synonym">HP1</name>
    <name evidence="16" type="synonym">HP1D</name>
    <name evidence="16" type="synonym">rhino</name>
    <name evidence="16" type="ORF">CG10683</name>
</gene>
<reference evidence="14" key="1">
    <citation type="journal article" date="2001" name="Genetics">
        <title>Drosophila rhino encodes a female-specific chromo-domain protein that affects chromosome structure and egg polarity.</title>
        <authorList>
            <person name="Volpe A.M."/>
            <person name="Horowitz H."/>
            <person name="Grafer C.M."/>
            <person name="Jackson S.M."/>
            <person name="Berg C.A."/>
        </authorList>
    </citation>
    <scope>NUCLEOTIDE SEQUENCE [MRNA]</scope>
    <scope>FUNCTION</scope>
    <scope>TISSUE SPECIFICITY</scope>
    <scope>DEVELOPMENTAL STAGE</scope>
    <scope>DISRUPTION PHENOTYPE</scope>
    <source>
        <tissue evidence="14">Ovary</tissue>
    </source>
</reference>
<reference evidence="17" key="2">
    <citation type="journal article" date="2000" name="Science">
        <title>The genome sequence of Drosophila melanogaster.</title>
        <authorList>
            <person name="Adams M.D."/>
            <person name="Celniker S.E."/>
            <person name="Holt R.A."/>
            <person name="Evans C.A."/>
            <person name="Gocayne J.D."/>
            <person name="Amanatides P.G."/>
            <person name="Scherer S.E."/>
            <person name="Li P.W."/>
            <person name="Hoskins R.A."/>
            <person name="Galle R.F."/>
            <person name="George R.A."/>
            <person name="Lewis S.E."/>
            <person name="Richards S."/>
            <person name="Ashburner M."/>
            <person name="Henderson S.N."/>
            <person name="Sutton G.G."/>
            <person name="Wortman J.R."/>
            <person name="Yandell M.D."/>
            <person name="Zhang Q."/>
            <person name="Chen L.X."/>
            <person name="Brandon R.C."/>
            <person name="Rogers Y.-H.C."/>
            <person name="Blazej R.G."/>
            <person name="Champe M."/>
            <person name="Pfeiffer B.D."/>
            <person name="Wan K.H."/>
            <person name="Doyle C."/>
            <person name="Baxter E.G."/>
            <person name="Helt G."/>
            <person name="Nelson C.R."/>
            <person name="Miklos G.L.G."/>
            <person name="Abril J.F."/>
            <person name="Agbayani A."/>
            <person name="An H.-J."/>
            <person name="Andrews-Pfannkoch C."/>
            <person name="Baldwin D."/>
            <person name="Ballew R.M."/>
            <person name="Basu A."/>
            <person name="Baxendale J."/>
            <person name="Bayraktaroglu L."/>
            <person name="Beasley E.M."/>
            <person name="Beeson K.Y."/>
            <person name="Benos P.V."/>
            <person name="Berman B.P."/>
            <person name="Bhandari D."/>
            <person name="Bolshakov S."/>
            <person name="Borkova D."/>
            <person name="Botchan M.R."/>
            <person name="Bouck J."/>
            <person name="Brokstein P."/>
            <person name="Brottier P."/>
            <person name="Burtis K.C."/>
            <person name="Busam D.A."/>
            <person name="Butler H."/>
            <person name="Cadieu E."/>
            <person name="Center A."/>
            <person name="Chandra I."/>
            <person name="Cherry J.M."/>
            <person name="Cawley S."/>
            <person name="Dahlke C."/>
            <person name="Davenport L.B."/>
            <person name="Davies P."/>
            <person name="de Pablos B."/>
            <person name="Delcher A."/>
            <person name="Deng Z."/>
            <person name="Mays A.D."/>
            <person name="Dew I."/>
            <person name="Dietz S.M."/>
            <person name="Dodson K."/>
            <person name="Doup L.E."/>
            <person name="Downes M."/>
            <person name="Dugan-Rocha S."/>
            <person name="Dunkov B.C."/>
            <person name="Dunn P."/>
            <person name="Durbin K.J."/>
            <person name="Evangelista C.C."/>
            <person name="Ferraz C."/>
            <person name="Ferriera S."/>
            <person name="Fleischmann W."/>
            <person name="Fosler C."/>
            <person name="Gabrielian A.E."/>
            <person name="Garg N.S."/>
            <person name="Gelbart W.M."/>
            <person name="Glasser K."/>
            <person name="Glodek A."/>
            <person name="Gong F."/>
            <person name="Gorrell J.H."/>
            <person name="Gu Z."/>
            <person name="Guan P."/>
            <person name="Harris M."/>
            <person name="Harris N.L."/>
            <person name="Harvey D.A."/>
            <person name="Heiman T.J."/>
            <person name="Hernandez J.R."/>
            <person name="Houck J."/>
            <person name="Hostin D."/>
            <person name="Houston K.A."/>
            <person name="Howland T.J."/>
            <person name="Wei M.-H."/>
            <person name="Ibegwam C."/>
            <person name="Jalali M."/>
            <person name="Kalush F."/>
            <person name="Karpen G.H."/>
            <person name="Ke Z."/>
            <person name="Kennison J.A."/>
            <person name="Ketchum K.A."/>
            <person name="Kimmel B.E."/>
            <person name="Kodira C.D."/>
            <person name="Kraft C.L."/>
            <person name="Kravitz S."/>
            <person name="Kulp D."/>
            <person name="Lai Z."/>
            <person name="Lasko P."/>
            <person name="Lei Y."/>
            <person name="Levitsky A.A."/>
            <person name="Li J.H."/>
            <person name="Li Z."/>
            <person name="Liang Y."/>
            <person name="Lin X."/>
            <person name="Liu X."/>
            <person name="Mattei B."/>
            <person name="McIntosh T.C."/>
            <person name="McLeod M.P."/>
            <person name="McPherson D."/>
            <person name="Merkulov G."/>
            <person name="Milshina N.V."/>
            <person name="Mobarry C."/>
            <person name="Morris J."/>
            <person name="Moshrefi A."/>
            <person name="Mount S.M."/>
            <person name="Moy M."/>
            <person name="Murphy B."/>
            <person name="Murphy L."/>
            <person name="Muzny D.M."/>
            <person name="Nelson D.L."/>
            <person name="Nelson D.R."/>
            <person name="Nelson K.A."/>
            <person name="Nixon K."/>
            <person name="Nusskern D.R."/>
            <person name="Pacleb J.M."/>
            <person name="Palazzolo M."/>
            <person name="Pittman G.S."/>
            <person name="Pan S."/>
            <person name="Pollard J."/>
            <person name="Puri V."/>
            <person name="Reese M.G."/>
            <person name="Reinert K."/>
            <person name="Remington K."/>
            <person name="Saunders R.D.C."/>
            <person name="Scheeler F."/>
            <person name="Shen H."/>
            <person name="Shue B.C."/>
            <person name="Siden-Kiamos I."/>
            <person name="Simpson M."/>
            <person name="Skupski M.P."/>
            <person name="Smith T.J."/>
            <person name="Spier E."/>
            <person name="Spradling A.C."/>
            <person name="Stapleton M."/>
            <person name="Strong R."/>
            <person name="Sun E."/>
            <person name="Svirskas R."/>
            <person name="Tector C."/>
            <person name="Turner R."/>
            <person name="Venter E."/>
            <person name="Wang A.H."/>
            <person name="Wang X."/>
            <person name="Wang Z.-Y."/>
            <person name="Wassarman D.A."/>
            <person name="Weinstock G.M."/>
            <person name="Weissenbach J."/>
            <person name="Williams S.M."/>
            <person name="Woodage T."/>
            <person name="Worley K.C."/>
            <person name="Wu D."/>
            <person name="Yang S."/>
            <person name="Yao Q.A."/>
            <person name="Ye J."/>
            <person name="Yeh R.-F."/>
            <person name="Zaveri J.S."/>
            <person name="Zhan M."/>
            <person name="Zhang G."/>
            <person name="Zhao Q."/>
            <person name="Zheng L."/>
            <person name="Zheng X.H."/>
            <person name="Zhong F.N."/>
            <person name="Zhong W."/>
            <person name="Zhou X."/>
            <person name="Zhu S.C."/>
            <person name="Zhu X."/>
            <person name="Smith H.O."/>
            <person name="Gibbs R.A."/>
            <person name="Myers E.W."/>
            <person name="Rubin G.M."/>
            <person name="Venter J.C."/>
        </authorList>
    </citation>
    <scope>NUCLEOTIDE SEQUENCE [LARGE SCALE GENOMIC DNA]</scope>
    <source>
        <strain evidence="17">Berkeley</strain>
    </source>
</reference>
<reference evidence="17" key="3">
    <citation type="journal article" date="2002" name="Genome Biol.">
        <title>Annotation of the Drosophila melanogaster euchromatic genome: a systematic review.</title>
        <authorList>
            <person name="Misra S."/>
            <person name="Crosby M.A."/>
            <person name="Mungall C.J."/>
            <person name="Matthews B.B."/>
            <person name="Campbell K.S."/>
            <person name="Hradecky P."/>
            <person name="Huang Y."/>
            <person name="Kaminker J.S."/>
            <person name="Millburn G.H."/>
            <person name="Prochnik S.E."/>
            <person name="Smith C.D."/>
            <person name="Tupy J.L."/>
            <person name="Whitfield E.J."/>
            <person name="Bayraktaroglu L."/>
            <person name="Berman B.P."/>
            <person name="Bettencourt B.R."/>
            <person name="Celniker S.E."/>
            <person name="de Grey A.D.N.J."/>
            <person name="Drysdale R.A."/>
            <person name="Harris N.L."/>
            <person name="Richter J."/>
            <person name="Russo S."/>
            <person name="Schroeder A.J."/>
            <person name="Shu S.Q."/>
            <person name="Stapleton M."/>
            <person name="Yamada C."/>
            <person name="Ashburner M."/>
            <person name="Gelbart W.M."/>
            <person name="Rubin G.M."/>
            <person name="Lewis S.E."/>
        </authorList>
    </citation>
    <scope>GENOME REANNOTATION</scope>
    <source>
        <strain evidence="17">Berkeley</strain>
    </source>
</reference>
<reference evidence="15" key="4">
    <citation type="journal article" date="2002" name="Genome Biol.">
        <title>A Drosophila full-length cDNA resource.</title>
        <authorList>
            <person name="Stapleton M."/>
            <person name="Carlson J.W."/>
            <person name="Brokstein P."/>
            <person name="Yu C."/>
            <person name="Champe M."/>
            <person name="George R.A."/>
            <person name="Guarin H."/>
            <person name="Kronmiller B."/>
            <person name="Pacleb J.M."/>
            <person name="Park S."/>
            <person name="Wan K.H."/>
            <person name="Rubin G.M."/>
            <person name="Celniker S.E."/>
        </authorList>
    </citation>
    <scope>NUCLEOTIDE SEQUENCE [LARGE SCALE MRNA]</scope>
    <source>
        <strain evidence="15">Berkeley</strain>
        <tissue evidence="15">Embryo</tissue>
    </source>
</reference>
<reference evidence="13" key="5">
    <citation type="journal article" date="2009" name="Cell">
        <title>The Drosophila HP1 homolog Rhino is required for transposon silencing and piRNA production by dual-strand clusters.</title>
        <authorList>
            <person name="Klattenhoff C."/>
            <person name="Xi H."/>
            <person name="Li C."/>
            <person name="Lee S."/>
            <person name="Xu J."/>
            <person name="Khurana J.S."/>
            <person name="Zhang F."/>
            <person name="Schultz N."/>
            <person name="Koppetsch B.S."/>
            <person name="Nowosielska A."/>
            <person name="Seitz H."/>
            <person name="Zamore P.D."/>
            <person name="Weng Z."/>
            <person name="Theurkauf W.E."/>
        </authorList>
    </citation>
    <scope>FUNCTION</scope>
    <scope>SUBCELLULAR LOCATION</scope>
</reference>
<reference evidence="13" key="6">
    <citation type="journal article" date="2014" name="Cell">
        <title>The rhino-deadlock-cutoff complex licenses noncanonical transcription of dual-strand piRNA clusters in Drosophila.</title>
        <authorList>
            <person name="Mohn F."/>
            <person name="Sienski G."/>
            <person name="Handler D."/>
            <person name="Brennecke J."/>
        </authorList>
    </citation>
    <scope>FUNCTION</scope>
    <scope>IDENTIFICATION IN THE RDC COMPLEX</scope>
    <scope>INTERACTION WITH DEL AND CUFF</scope>
    <scope>SUBCELLULAR LOCATION</scope>
</reference>
<reference key="7">
    <citation type="journal article" date="2016" name="Mol. Cell">
        <title>Cutoff Suppresses RNA Polymerase II Termination to Ensure Expression of piRNA Precursors.</title>
        <authorList>
            <person name="Chen Y.A."/>
            <person name="Stuwe E."/>
            <person name="Luo Y."/>
            <person name="Ninova M."/>
            <person name="Le Thomas A."/>
            <person name="Rozhavskaya E."/>
            <person name="Li S."/>
            <person name="Vempati S."/>
            <person name="Laver J.D."/>
            <person name="Patel D.J."/>
            <person name="Smibert C.A."/>
            <person name="Lipshitz H.D."/>
            <person name="Toth K.F."/>
            <person name="Aravin A.A."/>
        </authorList>
    </citation>
    <scope>FUNCTION</scope>
</reference>
<reference evidence="13" key="8">
    <citation type="journal article" date="2022" name="Elife">
        <title>The Drosophila ZAD zinc finger protein Kipferl guides Rhino to piRNA clusters.</title>
        <authorList>
            <person name="Baumgartner L."/>
            <person name="Handler D."/>
            <person name="Platzer S.W."/>
            <person name="Yu C."/>
            <person name="Duchek P."/>
            <person name="Brennecke J."/>
        </authorList>
    </citation>
    <scope>FUNCTION</scope>
    <scope>INTERACTION WITH KIPF</scope>
    <scope>SUBCELLULAR LOCATION</scope>
    <scope>TISSUE SPECIFICITY</scope>
</reference>
<reference evidence="18 19" key="9">
    <citation type="journal article" date="2014" name="Genes Dev.">
        <title>Transgenerationally inherited piRNAs trigger piRNA biogenesis by changing the chromatin of piRNA clusters and inducing precursor processing.</title>
        <authorList>
            <person name="Le Thomas A."/>
            <person name="Stuwe E."/>
            <person name="Li S."/>
            <person name="Du J."/>
            <person name="Marinov G."/>
            <person name="Rozhkov N."/>
            <person name="Chen Y.C."/>
            <person name="Luo Y."/>
            <person name="Sachidanandam R."/>
            <person name="Toth K.F."/>
            <person name="Patel D."/>
            <person name="Aravin A.A."/>
        </authorList>
    </citation>
    <scope>X-RAY CRYSTALLOGRAPHY (1.50 ANGSTROMS) OF 19-85 IN COMPLEX WITH HISTONE H3 PEPTIDE</scope>
    <scope>FUNCTION</scope>
    <scope>SUBUNIT</scope>
    <scope>DOMAIN</scope>
    <scope>INTERACTION WITH DEL AND H3</scope>
</reference>
<reference evidence="20" key="10">
    <citation type="journal article" date="2015" name="Cell Res.">
        <title>Structural insights into Rhino-mediated germline piRNA cluster formation.</title>
        <authorList>
            <person name="Yu B."/>
            <person name="Cassani M."/>
            <person name="Wang M."/>
            <person name="Liu M."/>
            <person name="Ma J."/>
            <person name="Li G."/>
            <person name="Zhang Z."/>
            <person name="Huang Y."/>
        </authorList>
    </citation>
    <scope>X-RAY CRYSTALLOGRAPHY (1.80 ANGSTROMS) OF 20-90 IN COMPLEX WITH HISTONE H3 PEPTIDE</scope>
    <scope>FUNCTION</scope>
    <scope>SUBUNIT</scope>
    <scope>INTERACTION WITH H3</scope>
    <scope>DOMAIN</scope>
    <scope>MUTAGENESIS OF PHE-34; TRP-45; PHE-48 AND PHE-76</scope>
</reference>
<reference evidence="21" key="11">
    <citation type="journal article" date="2018" name="EMBO Rep.">
        <title>Structural insights into Rhino-Deadlock complex for germline piRNA cluster specification.</title>
        <authorList>
            <person name="Yu B."/>
            <person name="Lin Y.A."/>
            <person name="Parhad S.S."/>
            <person name="Jin Z."/>
            <person name="Ma J."/>
            <person name="Theurkauf W.E."/>
            <person name="Zhang Z.Z."/>
            <person name="Huang Y."/>
        </authorList>
    </citation>
    <scope>X-RAY CRYSTALLOGRAPHY (2.10 ANGSTROMS) OF 353-418 IN COMPLEX WITH DEL</scope>
    <scope>INTERACTION WITH DEL</scope>
    <scope>MUTAGENESIS OF 369-HIS--MET-373; 371-TYR--PHE-380 AND 412-LEU--VAL-416</scope>
</reference>
<organism evidence="17">
    <name type="scientific">Drosophila melanogaster</name>
    <name type="common">Fruit fly</name>
    <dbReference type="NCBI Taxonomy" id="7227"/>
    <lineage>
        <taxon>Eukaryota</taxon>
        <taxon>Metazoa</taxon>
        <taxon>Ecdysozoa</taxon>
        <taxon>Arthropoda</taxon>
        <taxon>Hexapoda</taxon>
        <taxon>Insecta</taxon>
        <taxon>Pterygota</taxon>
        <taxon>Neoptera</taxon>
        <taxon>Endopterygota</taxon>
        <taxon>Diptera</taxon>
        <taxon>Brachycera</taxon>
        <taxon>Muscomorpha</taxon>
        <taxon>Ephydroidea</taxon>
        <taxon>Drosophilidae</taxon>
        <taxon>Drosophila</taxon>
        <taxon>Sophophora</taxon>
    </lineage>
</organism>
<comment type="function">
    <text evidence="3 4 5 6 7 8 10">Involved in piRNA (piwi-interacting RNA)-mediated transposon repression (PubMed:19732946, PubMed:36193674). May be involved in formation of the perinuclear nuage, a subcellular structure implicated in RNA processing that may be involved in transposon RNA surveillance and silencing (PubMed:19732946, PubMed:36193674). Required for ping-pong amplification during piRNA biogenesis, probably by promoting transcription of piRNA precursors (PubMed:19732946, PubMed:25085419, PubMed:36193674). As part of the Rhino-Deadlock-Cutoff (RDC) Complex associates with, and drives non-canonical transcription of germline specific dual-strand piRNA clusters 80F, 38C and 42AB, but not single-stranded piRNA cluster 20A (PubMed:19732946, PubMed:24906153, PubMed:25085419, PubMed:36193674). Induction of piRNA expression is potentially achieved through a mechanism that prevents transcriptional termination and leads to readthrough from flanking transcription units (PubMed:24906153). Recruited to specific chromatin regions by a combination of H3K9me2/3 histone methylation and differentially expressed sequence-specific recruitment factors (PubMed:24906153, PubMed:25085419, PubMed:25613572, PubMed:36193674). This association may involve direct interaction with DNA (PubMed:25613572). Associates with chromatin upon exposure to homologous piRNA and facilitates transcriptional read-through (PubMed:27292797). As part of the RDC complex, involved in suppression of splicing (PubMed:27292797). In ovaries, recruitment to specific heterochromatin clusters is nucleated and stabilized by kipf/kipferl (PubMed:36193674). During oogenesis, involved in axis specification and may regulate chromosome condensation at the onset of a mitotic-like phase that occurs during nurse cell chromosome duplication (PubMed:11729157). Involved in the distribution of mRNAs for proteins that play a role in anterior-posterior and dorsal-ventral axes specification during development of the oocyte, including grk/gurken, osk/oskar and vas/vasa (PubMed:11729157, PubMed:19732946). Mitigates meiotic double strand breaks and interacts with DNA damage signaling to mediate axis specification (PubMed:19732946).</text>
</comment>
<comment type="subunit">
    <text evidence="5 6 7 9 10 12">Homodimer in solution (PubMed:25085419, PubMed:25613572). Dimerization is essential for chromatin binding (PubMed:25613572). Component of the Rhino-Deadlock-Cutoff (RDC) complex, composed of rhi/rhino, del/deadlock and cuff/cutoff (PubMed:24906153). Interacts (via C-terminus) with del/deadlock (via N-terminus); this interaction is direct (PubMed:24906153, PubMed:29858487). Two copies of del/deadlock associate with each rhi/rhino dimer (PubMed:29858487). Interacts with cuff/cutoff; this interaction is indirect and is mediated by del/deadlock (PubMed:24906153, PubMed:25085419). Interacts (via Chromo domain) with kipf/kipferl (via C2H2 type zinc finger 4) (PubMed:36193674). Interacts (via Chromo domain) with His3/histone H3 (via N-terminus di- or tri-methylated on 'Lys-10' (H3K9me2/3)); this interaction is direct (PubMed:24906153, PubMed:25085419, PubMed:25613572). Two His3 N-terminal tails oriented anti-parallel to each other are required for dimer binding to His3 (PubMed:25613572).</text>
</comment>
<comment type="interaction">
    <interactant intactId="EBI-149916">
        <id>Q7JXA8</id>
    </interactant>
    <interactant intactId="EBI-151790">
        <id>Q9VIF5</id>
        <label>del</label>
    </interactant>
    <organismsDiffer>false</organismsDiffer>
    <experiments>5</experiments>
</comment>
<comment type="interaction">
    <interactant intactId="EBI-149916">
        <id>Q7JXA8</id>
    </interactant>
    <interactant intactId="EBI-522090">
        <id>P02299</id>
        <label>His3:CG33854</label>
    </interactant>
    <organismsDiffer>false</organismsDiffer>
    <experiments>4</experiments>
</comment>
<comment type="interaction">
    <interactant intactId="EBI-149916">
        <id>Q7JXA8</id>
    </interactant>
    <interactant intactId="EBI-115627">
        <id>Q8T053</id>
        <label>kipf</label>
    </interactant>
    <organismsDiffer>false</organismsDiffer>
    <experiments>9</experiments>
</comment>
<comment type="interaction">
    <interactant intactId="EBI-149916">
        <id>Q7JXA8</id>
    </interactant>
    <interactant intactId="EBI-79722">
        <id>P68431</id>
        <label>H3C12</label>
    </interactant>
    <organismsDiffer>true</organismsDiffer>
    <experiments>2</experiments>
</comment>
<comment type="subcellular location">
    <subcellularLocation>
        <location evidence="4 5 7 10">Nucleus</location>
    </subcellularLocation>
    <subcellularLocation>
        <location evidence="4 5 7 10">Chromosome</location>
    </subcellularLocation>
    <text evidence="4 5">Localizes to germline specific nuclear foci throughout oogenesis, which corelate with dual-strand piRNA source loci (PubMed:19732946, PubMed:24906153). All components of the Rhino-Deadlock-Cutoff (RDC) Complex associate with these nuclear foci and are required for their formation (PubMed:24906153).</text>
</comment>
<comment type="tissue specificity">
    <text evidence="3 10">Female specific, expressed in both somatic and germline cells but highly enriched in ovaries (PubMed:11729157). In the germarium of the developing oocyte expressed in germline stem cells, cystoblasts and developing germline cysts (PubMed:36193674). Expressed in nurse cells in the germarium and egg chamber (PubMed:36193674).</text>
</comment>
<comment type="developmental stage">
    <text evidence="3 11">During oogenesis, low levels in region 1 of the germarium, accumulates in the oocyte by stage 5, and between stage 8 and 10A localizes to the posterior of the oocyte (PubMed:11729157). By stage 10B posterior localization in the oocyte is lost but expression is significantly enhanced in nurse cells (PubMed:11729157). Abundant early during embryogenesis with levels gradually tapering off (PubMed:11729157). Displays an expression profile typical of maternal transcripts deposited into the embryo (PubMed:11729157).</text>
</comment>
<comment type="domain">
    <text evidence="6 7">The Chromo domain mediates binding to chromatin through interaction with the histone H3 N-terminal tail. Binding requires di- or tri- methylation of histone H3 'Lys-10' (H3K9me2/3).</text>
</comment>
<comment type="disruption phenotype">
    <text evidence="3">Females are sterile and produce eggs with various polarity defects.</text>
</comment>
<comment type="miscellaneous">
    <text evidence="13">Wild-type eggs possess two dorsal respiratory appendages. Mutations in rhi/Rhino results in partial or complete fusion of these appendages resulting in a single appendage from which Rhino gets its name.</text>
</comment>
<protein>
    <recommendedName>
        <fullName evidence="13">Chromo domain-containing protein rhino</fullName>
    </recommendedName>
    <alternativeName>
        <fullName evidence="16">Heterochromatin protein 1</fullName>
    </alternativeName>
</protein>
<keyword id="KW-0002">3D-structure</keyword>
<keyword id="KW-0156">Chromatin regulator</keyword>
<keyword id="KW-0158">Chromosome</keyword>
<keyword id="KW-0539">Nucleus</keyword>
<keyword id="KW-1185">Reference proteome</keyword>
<keyword id="KW-0678">Repressor</keyword>
<keyword id="KW-0804">Transcription</keyword>
<keyword id="KW-0889">Transcription antitermination</keyword>
<keyword id="KW-0805">Transcription regulation</keyword>